<keyword id="KW-0002">3D-structure</keyword>
<keyword id="KW-0012">Acyltransferase</keyword>
<keyword id="KW-0028">Amino-acid biosynthesis</keyword>
<keyword id="KW-0963">Cytoplasm</keyword>
<keyword id="KW-0486">Methionine biosynthesis</keyword>
<keyword id="KW-0808">Transferase</keyword>
<reference key="1">
    <citation type="journal article" date="2004" name="Nucleic Acids Res.">
        <title>The genome sequence of Bacillus cereus ATCC 10987 reveals metabolic adaptations and a large plasmid related to Bacillus anthracis pXO1.</title>
        <authorList>
            <person name="Rasko D.A."/>
            <person name="Ravel J."/>
            <person name="Oekstad O.A."/>
            <person name="Helgason E."/>
            <person name="Cer R.Z."/>
            <person name="Jiang L."/>
            <person name="Shores K.A."/>
            <person name="Fouts D.E."/>
            <person name="Tourasse N.J."/>
            <person name="Angiuoli S.V."/>
            <person name="Kolonay J.F."/>
            <person name="Nelson W.C."/>
            <person name="Kolstoe A.-B."/>
            <person name="Fraser C.M."/>
            <person name="Read T.D."/>
        </authorList>
    </citation>
    <scope>NUCLEOTIDE SEQUENCE [LARGE SCALE GENOMIC DNA]</scope>
    <source>
        <strain>ATCC 10987 / NRS 248</strain>
    </source>
</reference>
<reference key="2">
    <citation type="journal article" date="2017" name="Nat. Chem. Biol.">
        <title>Parallel evolution of non-homologous isofunctional enzymes in methionine biosynthesis.</title>
        <authorList>
            <person name="Bastard K."/>
            <person name="Perret A."/>
            <person name="Mariage A."/>
            <person name="Bessonnet T."/>
            <person name="Pinet-Turpault A."/>
            <person name="Petit J.L."/>
            <person name="Darii E."/>
            <person name="Bazire P."/>
            <person name="Vergne-Vaxelaire C."/>
            <person name="Brewee C."/>
            <person name="Debard A."/>
            <person name="Pellouin V."/>
            <person name="Besnard-Gonnet M."/>
            <person name="Artiguenave F."/>
            <person name="Medigue C."/>
            <person name="Vallenet D."/>
            <person name="Danchin A."/>
            <person name="Zaparucha A."/>
            <person name="Weissenbach J."/>
            <person name="Salanoubat M."/>
            <person name="de Berardinis V."/>
        </authorList>
    </citation>
    <scope>3D-STRUCTURE MODELING</scope>
</reference>
<reference evidence="9" key="3">
    <citation type="journal article" date="2007" name="Proteins">
        <title>Crystal structure of homoserine O-succinyltransferase from Bacillus cereus at 2.4 A resolution.</title>
        <authorList>
            <person name="Zubieta C."/>
            <person name="Krishna S.S."/>
            <person name="McMullan D."/>
            <person name="Miller M.D."/>
            <person name="Abdubek P."/>
            <person name="Agarwalla S."/>
            <person name="Ambing E."/>
            <person name="Astakhova T."/>
            <person name="Axelrod H.L."/>
            <person name="Carlton D."/>
            <person name="Chiu H.J."/>
            <person name="Clayton T."/>
            <person name="Deller M."/>
            <person name="DiDonato M."/>
            <person name="Duan L."/>
            <person name="Elsliger M.A."/>
            <person name="Grzechnik S.K."/>
            <person name="Hale J."/>
            <person name="Hampton E."/>
            <person name="Han G.W."/>
            <person name="Haugen J."/>
            <person name="Jaroszewski L."/>
            <person name="Jin K.K."/>
            <person name="Klock H.E."/>
            <person name="Knuth M.W."/>
            <person name="Koesema E."/>
            <person name="Kumar A."/>
            <person name="Marciano D."/>
            <person name="Morse A.T."/>
            <person name="Nigoghossian E."/>
            <person name="Oommachen S."/>
            <person name="Reyes R."/>
            <person name="Rife C.L."/>
            <person name="van den Bedem H."/>
            <person name="Weekes D."/>
            <person name="White A."/>
            <person name="Xu Q."/>
            <person name="Hodgson K.O."/>
            <person name="Wooley J."/>
            <person name="Deacon A.M."/>
            <person name="Godzik A."/>
            <person name="Lesley S.A."/>
            <person name="Wilson I.A."/>
        </authorList>
    </citation>
    <scope>X-RAY CRYSTALLOGRAPHY (2.40 ANGSTROMS)</scope>
    <scope>SUBUNIT</scope>
    <scope>ACTIVE SITE</scope>
</reference>
<reference evidence="10" key="4">
    <citation type="journal article" date="2008" name="J. Biol. Chem.">
        <title>A single amino acid change is responsible for evolution of acyltransferase specificity in bacterial methionine biosynthesis.</title>
        <authorList>
            <person name="Zubieta C."/>
            <person name="Arkus K.A."/>
            <person name="Cahoon R.E."/>
            <person name="Jez J.M."/>
        </authorList>
    </citation>
    <scope>X-RAY CRYSTALLOGRAPHY (2.00 ANGSTROMS) IN COMPLEX WITH L-HOMOSERINE</scope>
    <scope>FUNCTION AS AN ACETYLTRANSFERASE</scope>
    <scope>CATALYTIC ACTIVITY</scope>
    <scope>BIOPHYSICOCHEMICAL PROPERTIES</scope>
    <scope>PATHWAY</scope>
    <scope>SUBUNIT</scope>
    <scope>ACTIVE SITE</scope>
    <scope>MUTAGENESIS OF LYS-47; GLU-111; CYS-142; LYS-163; SER-192; HIS-235; GLU-237 AND ARG-249</scope>
</reference>
<proteinExistence type="evidence at protein level"/>
<accession>Q72X44</accession>
<name>METAA_BACC1</name>
<organism>
    <name type="scientific">Bacillus cereus (strain ATCC 10987 / NRS 248)</name>
    <dbReference type="NCBI Taxonomy" id="222523"/>
    <lineage>
        <taxon>Bacteria</taxon>
        <taxon>Bacillati</taxon>
        <taxon>Bacillota</taxon>
        <taxon>Bacilli</taxon>
        <taxon>Bacillales</taxon>
        <taxon>Bacillaceae</taxon>
        <taxon>Bacillus</taxon>
        <taxon>Bacillus cereus group</taxon>
    </lineage>
</organism>
<comment type="function">
    <text evidence="3">Transfers an acetyl group from acetyl-CoA to L-homoserine, forming acetyl-L-homoserine. Utilizes a ping-pong kinetic mechanism in which the acetyl group of acetyl-CoA is initially transferred to the enzyme to form an acetyl-enzyme intermediate before subsequent transfer to homoserine to form the final product, O-acetylhomoserine. Cannot use succinyl-CoA as the acyl donor.</text>
</comment>
<comment type="catalytic activity">
    <reaction evidence="1 3">
        <text>L-homoserine + acetyl-CoA = O-acetyl-L-homoserine + CoA</text>
        <dbReference type="Rhea" id="RHEA:13701"/>
        <dbReference type="ChEBI" id="CHEBI:57287"/>
        <dbReference type="ChEBI" id="CHEBI:57288"/>
        <dbReference type="ChEBI" id="CHEBI:57476"/>
        <dbReference type="ChEBI" id="CHEBI:57716"/>
        <dbReference type="EC" id="2.3.1.31"/>
    </reaction>
</comment>
<comment type="biophysicochemical properties">
    <kinetics>
        <KM evidence="3">185 uM for acetyl-CoA</KM>
        <KM evidence="3">214 uM for homoserine</KM>
        <text evidence="3">kcat is 58.6 min(-1).</text>
    </kinetics>
</comment>
<comment type="pathway">
    <text evidence="1 8">Amino-acid biosynthesis; L-methionine biosynthesis via de novo pathway; O-acetyl-L-homoserine from L-homoserine: step 1/1.</text>
</comment>
<comment type="subunit">
    <text evidence="2 3">Homodimer.</text>
</comment>
<comment type="subcellular location">
    <subcellularLocation>
        <location evidence="1 6">Cytoplasm</location>
    </subcellularLocation>
</comment>
<comment type="similarity">
    <text evidence="1">Belongs to the MetA family.</text>
</comment>
<feature type="chain" id="PRO_0000199736" description="Homoserine O-acetyltransferase">
    <location>
        <begin position="1"/>
        <end position="301"/>
    </location>
</feature>
<feature type="active site" description="Acyl-thioester intermediate" evidence="1 7 8">
    <location>
        <position position="142"/>
    </location>
</feature>
<feature type="active site" description="Proton acceptor" evidence="1 7 8">
    <location>
        <position position="235"/>
    </location>
</feature>
<feature type="active site" evidence="1 7 8">
    <location>
        <position position="237"/>
    </location>
</feature>
<feature type="binding site" evidence="1 3 10">
    <location>
        <position position="163"/>
    </location>
    <ligand>
        <name>substrate</name>
    </ligand>
</feature>
<feature type="binding site" evidence="1 3 10">
    <location>
        <position position="192"/>
    </location>
    <ligand>
        <name>substrate</name>
    </ligand>
</feature>
<feature type="binding site" evidence="1 3 10">
    <location>
        <position position="249"/>
    </location>
    <ligand>
        <name>substrate</name>
    </ligand>
</feature>
<feature type="site" description="Important for acyl-CoA specificity" evidence="1">
    <location>
        <position position="111"/>
    </location>
</feature>
<feature type="site" description="Important for substrate specificity" evidence="1">
    <location>
        <position position="192"/>
    </location>
</feature>
<feature type="mutagenesis site" description="17-fold increase in Km for acetyl-CoA and 14-fold decrease in catalytic activity." evidence="3">
    <original>K</original>
    <variation>M</variation>
    <location>
        <position position="47"/>
    </location>
</feature>
<feature type="mutagenesis site" description="7-fold increase in Km for acetyl-CoA." evidence="3">
    <original>K</original>
    <variation>R</variation>
    <location>
        <position position="47"/>
    </location>
</feature>
<feature type="mutagenesis site" description="No activity with acetyl-CoA but catalyzes an acyltransferase reaction using succinyl-CoA and homoserine." evidence="3">
    <original>E</original>
    <variation>G</variation>
    <location>
        <position position="111"/>
    </location>
</feature>
<feature type="mutagenesis site" description="Lack of activity." evidence="3">
    <original>C</original>
    <variation>A</variation>
    <variation>S</variation>
    <location>
        <position position="142"/>
    </location>
</feature>
<feature type="mutagenesis site" description="13-fold increase in Km for homoserine." evidence="3">
    <original>K</original>
    <variation>M</variation>
    <location>
        <position position="163"/>
    </location>
</feature>
<feature type="mutagenesis site" description="5-fold increase in Km for homoserine." evidence="3">
    <original>S</original>
    <variation>A</variation>
    <location>
        <position position="192"/>
    </location>
</feature>
<feature type="mutagenesis site" description="Lack of activity." evidence="3">
    <original>H</original>
    <variation>A</variation>
    <variation>N</variation>
    <variation>Q</variation>
    <location>
        <position position="235"/>
    </location>
</feature>
<feature type="mutagenesis site" description="65-fold decrease in catalytic activity." evidence="3">
    <original>E</original>
    <variation>A</variation>
    <location>
        <position position="237"/>
    </location>
</feature>
<feature type="mutagenesis site" description="6-fold decrease in catalytic activity." evidence="3">
    <original>E</original>
    <variation>D</variation>
    <location>
        <position position="237"/>
    </location>
</feature>
<feature type="mutagenesis site" description="19-fold decrease in catalytic activity." evidence="3">
    <original>E</original>
    <variation>Q</variation>
    <location>
        <position position="237"/>
    </location>
</feature>
<feature type="mutagenesis site" description="64-fold increase in Km for homoserine and 10-fold decrease in catalytic activity." evidence="3">
    <original>R</original>
    <variation>M</variation>
    <location>
        <position position="249"/>
    </location>
</feature>
<feature type="strand" evidence="11">
    <location>
        <begin position="36"/>
        <end position="41"/>
    </location>
</feature>
<feature type="helix" evidence="11">
    <location>
        <begin position="47"/>
        <end position="58"/>
    </location>
</feature>
<feature type="strand" evidence="11">
    <location>
        <begin position="61"/>
        <end position="63"/>
    </location>
</feature>
<feature type="strand" evidence="11">
    <location>
        <begin position="65"/>
        <end position="70"/>
    </location>
</feature>
<feature type="helix" evidence="11">
    <location>
        <begin position="92"/>
        <end position="95"/>
    </location>
</feature>
<feature type="strand" evidence="11">
    <location>
        <begin position="100"/>
        <end position="105"/>
    </location>
</feature>
<feature type="turn" evidence="11">
    <location>
        <begin position="109"/>
        <end position="112"/>
    </location>
</feature>
<feature type="helix" evidence="11">
    <location>
        <begin position="115"/>
        <end position="117"/>
    </location>
</feature>
<feature type="helix" evidence="11">
    <location>
        <begin position="121"/>
        <end position="134"/>
    </location>
</feature>
<feature type="strand" evidence="11">
    <location>
        <begin position="135"/>
        <end position="141"/>
    </location>
</feature>
<feature type="helix" evidence="11">
    <location>
        <begin position="143"/>
        <end position="153"/>
    </location>
</feature>
<feature type="strand" evidence="11">
    <location>
        <begin position="158"/>
        <end position="172"/>
    </location>
</feature>
<feature type="helix" evidence="11">
    <location>
        <begin position="178"/>
        <end position="180"/>
    </location>
</feature>
<feature type="strand" evidence="11">
    <location>
        <begin position="185"/>
        <end position="196"/>
    </location>
</feature>
<feature type="helix" evidence="11">
    <location>
        <begin position="199"/>
        <end position="203"/>
    </location>
</feature>
<feature type="strand" evidence="11">
    <location>
        <begin position="208"/>
        <end position="214"/>
    </location>
</feature>
<feature type="turn" evidence="11">
    <location>
        <begin position="215"/>
        <end position="217"/>
    </location>
</feature>
<feature type="strand" evidence="11">
    <location>
        <begin position="218"/>
        <end position="224"/>
    </location>
</feature>
<feature type="helix" evidence="11">
    <location>
        <begin position="225"/>
        <end position="227"/>
    </location>
</feature>
<feature type="strand" evidence="11">
    <location>
        <begin position="229"/>
        <end position="232"/>
    </location>
</feature>
<feature type="helix" evidence="11">
    <location>
        <begin position="242"/>
        <end position="253"/>
    </location>
</feature>
<feature type="helix" evidence="11">
    <location>
        <begin position="265"/>
        <end position="267"/>
    </location>
</feature>
<feature type="helix" evidence="11">
    <location>
        <begin position="278"/>
        <end position="291"/>
    </location>
</feature>
<sequence>MPIIIDKDLPARKVLQEENIFVMTKERAETQDIRALKIAILNLMPTKQETEAQLLRLIGNTPLQLDVHLLHMESHLSRNVAQEHLTSFYKTFRDIENEKFDGLIITGAPVETLSFEEVDYWEELKRIMEYSKTNVTSTLHICWGAQAGLYHHYGVQKYPLKEKMFGVFEHEVREQHVKLLQGFDELFFAPHSRHTEVRESDIREVKELTLLANSEEAGVHLVIGQEGRQVFALGHSEYSCDTLKQEYERDRDKGLNIDVPKNYFKHDNPNEKPLVRWRSHGNLLFSNWLNYYVYQETPYVL</sequence>
<gene>
    <name evidence="1" type="primary">metAA</name>
    <name evidence="4" type="synonym">metA</name>
    <name type="ordered locus">BCE_5534</name>
</gene>
<protein>
    <recommendedName>
        <fullName evidence="1 6">Homoserine O-acetyltransferase</fullName>
        <shortName evidence="1 6">HAT</shortName>
        <ecNumber evidence="1 3">2.3.1.31</ecNumber>
    </recommendedName>
    <alternativeName>
        <fullName evidence="1 5">Homoserine transacetylase</fullName>
        <shortName evidence="1 5">HTA</shortName>
    </alternativeName>
</protein>
<evidence type="ECO:0000255" key="1">
    <source>
        <dbReference type="HAMAP-Rule" id="MF_00295"/>
    </source>
</evidence>
<evidence type="ECO:0000269" key="2">
    <source>
    </source>
</evidence>
<evidence type="ECO:0000269" key="3">
    <source>
    </source>
</evidence>
<evidence type="ECO:0000303" key="4">
    <source>
    </source>
</evidence>
<evidence type="ECO:0000303" key="5">
    <source>
    </source>
</evidence>
<evidence type="ECO:0000305" key="6"/>
<evidence type="ECO:0000305" key="7">
    <source>
    </source>
</evidence>
<evidence type="ECO:0000305" key="8">
    <source>
    </source>
</evidence>
<evidence type="ECO:0007744" key="9">
    <source>
        <dbReference type="PDB" id="2GHR"/>
    </source>
</evidence>
<evidence type="ECO:0007744" key="10">
    <source>
        <dbReference type="PDB" id="2VDJ"/>
    </source>
</evidence>
<evidence type="ECO:0007829" key="11">
    <source>
        <dbReference type="PDB" id="2VDJ"/>
    </source>
</evidence>
<dbReference type="EC" id="2.3.1.31" evidence="1 3"/>
<dbReference type="EMBL" id="AE017194">
    <property type="protein sequence ID" value="AAS44434.1"/>
    <property type="molecule type" value="Genomic_DNA"/>
</dbReference>
<dbReference type="PDB" id="2GHR">
    <property type="method" value="X-ray"/>
    <property type="resolution" value="2.40 A"/>
    <property type="chains" value="A=1-301"/>
</dbReference>
<dbReference type="PDB" id="2VDJ">
    <property type="method" value="X-ray"/>
    <property type="resolution" value="2.00 A"/>
    <property type="chains" value="A=1-301"/>
</dbReference>
<dbReference type="PDBsum" id="2GHR"/>
<dbReference type="PDBsum" id="2VDJ"/>
<dbReference type="SMR" id="Q72X44"/>
<dbReference type="DNASU" id="2750729"/>
<dbReference type="KEGG" id="bca:BCE_5534"/>
<dbReference type="HOGENOM" id="CLU_057851_0_1_9"/>
<dbReference type="BRENDA" id="2.3.1.46">
    <property type="organism ID" value="648"/>
</dbReference>
<dbReference type="UniPathway" id="UPA00051">
    <property type="reaction ID" value="UER00074"/>
</dbReference>
<dbReference type="EvolutionaryTrace" id="Q72X44"/>
<dbReference type="Proteomes" id="UP000002527">
    <property type="component" value="Chromosome"/>
</dbReference>
<dbReference type="GO" id="GO:0005737">
    <property type="term" value="C:cytoplasm"/>
    <property type="evidence" value="ECO:0007669"/>
    <property type="project" value="UniProtKB-SubCell"/>
</dbReference>
<dbReference type="GO" id="GO:0004414">
    <property type="term" value="F:homoserine O-acetyltransferase activity"/>
    <property type="evidence" value="ECO:0007669"/>
    <property type="project" value="UniProtKB-EC"/>
</dbReference>
<dbReference type="GO" id="GO:0008899">
    <property type="term" value="F:homoserine O-succinyltransferase activity"/>
    <property type="evidence" value="ECO:0007669"/>
    <property type="project" value="UniProtKB-UniRule"/>
</dbReference>
<dbReference type="GO" id="GO:0019281">
    <property type="term" value="P:L-methionine biosynthetic process from homoserine via O-succinyl-L-homoserine and cystathionine"/>
    <property type="evidence" value="ECO:0007669"/>
    <property type="project" value="InterPro"/>
</dbReference>
<dbReference type="CDD" id="cd03131">
    <property type="entry name" value="GATase1_HTS"/>
    <property type="match status" value="1"/>
</dbReference>
<dbReference type="FunFam" id="3.40.50.880:FF:000004">
    <property type="entry name" value="Homoserine O-succinyltransferase"/>
    <property type="match status" value="1"/>
</dbReference>
<dbReference type="Gene3D" id="3.40.50.880">
    <property type="match status" value="1"/>
</dbReference>
<dbReference type="HAMAP" id="MF_00295">
    <property type="entry name" value="MetA_acyltransf"/>
    <property type="match status" value="1"/>
</dbReference>
<dbReference type="InterPro" id="IPR029062">
    <property type="entry name" value="Class_I_gatase-like"/>
</dbReference>
<dbReference type="InterPro" id="IPR005697">
    <property type="entry name" value="HST_MetA"/>
</dbReference>
<dbReference type="InterPro" id="IPR033752">
    <property type="entry name" value="MetA_family"/>
</dbReference>
<dbReference type="NCBIfam" id="TIGR01001">
    <property type="entry name" value="metA"/>
    <property type="match status" value="1"/>
</dbReference>
<dbReference type="PANTHER" id="PTHR20919">
    <property type="entry name" value="HOMOSERINE O-SUCCINYLTRANSFERASE"/>
    <property type="match status" value="1"/>
</dbReference>
<dbReference type="PANTHER" id="PTHR20919:SF0">
    <property type="entry name" value="HOMOSERINE O-SUCCINYLTRANSFERASE"/>
    <property type="match status" value="1"/>
</dbReference>
<dbReference type="Pfam" id="PF04204">
    <property type="entry name" value="HTS"/>
    <property type="match status" value="1"/>
</dbReference>
<dbReference type="PIRSF" id="PIRSF000450">
    <property type="entry name" value="H_ser_succinyltr"/>
    <property type="match status" value="1"/>
</dbReference>
<dbReference type="SUPFAM" id="SSF52317">
    <property type="entry name" value="Class I glutamine amidotransferase-like"/>
    <property type="match status" value="1"/>
</dbReference>